<organism>
    <name type="scientific">Wolinella succinogenes (strain ATCC 29543 / DSM 1740 / CCUG 13145 / JCM 31913 / LMG 7466 / NCTC 11488 / FDC 602W)</name>
    <name type="common">Vibrio succinogenes</name>
    <dbReference type="NCBI Taxonomy" id="273121"/>
    <lineage>
        <taxon>Bacteria</taxon>
        <taxon>Pseudomonadati</taxon>
        <taxon>Campylobacterota</taxon>
        <taxon>Epsilonproteobacteria</taxon>
        <taxon>Campylobacterales</taxon>
        <taxon>Helicobacteraceae</taxon>
        <taxon>Wolinella</taxon>
    </lineage>
</organism>
<feature type="chain" id="PRO_0000289457" description="Lipoprotein signal peptidase">
    <location>
        <begin position="1"/>
        <end position="146"/>
    </location>
</feature>
<feature type="transmembrane region" description="Helical" evidence="1">
    <location>
        <begin position="10"/>
        <end position="30"/>
    </location>
</feature>
<feature type="transmembrane region" description="Helical" evidence="1">
    <location>
        <begin position="54"/>
        <end position="74"/>
    </location>
</feature>
<feature type="transmembrane region" description="Helical" evidence="1">
    <location>
        <begin position="80"/>
        <end position="100"/>
    </location>
</feature>
<feature type="transmembrane region" description="Helical" evidence="1">
    <location>
        <begin position="118"/>
        <end position="138"/>
    </location>
</feature>
<feature type="active site" evidence="1">
    <location>
        <position position="110"/>
    </location>
</feature>
<feature type="active site" evidence="1">
    <location>
        <position position="127"/>
    </location>
</feature>
<gene>
    <name evidence="1" type="primary">lspA</name>
    <name type="ordered locus">WS0819</name>
</gene>
<dbReference type="EC" id="3.4.23.36" evidence="1"/>
<dbReference type="EMBL" id="BX571659">
    <property type="protein sequence ID" value="CAE09932.1"/>
    <property type="molecule type" value="Genomic_DNA"/>
</dbReference>
<dbReference type="RefSeq" id="WP_011138729.1">
    <property type="nucleotide sequence ID" value="NC_005090.1"/>
</dbReference>
<dbReference type="SMR" id="Q7M9M1"/>
<dbReference type="STRING" id="273121.WS0819"/>
<dbReference type="KEGG" id="wsu:WS0819"/>
<dbReference type="eggNOG" id="COG0597">
    <property type="taxonomic scope" value="Bacteria"/>
</dbReference>
<dbReference type="HOGENOM" id="CLU_083252_4_3_7"/>
<dbReference type="UniPathway" id="UPA00665"/>
<dbReference type="Proteomes" id="UP000000422">
    <property type="component" value="Chromosome"/>
</dbReference>
<dbReference type="GO" id="GO:0005886">
    <property type="term" value="C:plasma membrane"/>
    <property type="evidence" value="ECO:0007669"/>
    <property type="project" value="UniProtKB-SubCell"/>
</dbReference>
<dbReference type="GO" id="GO:0004190">
    <property type="term" value="F:aspartic-type endopeptidase activity"/>
    <property type="evidence" value="ECO:0007669"/>
    <property type="project" value="UniProtKB-UniRule"/>
</dbReference>
<dbReference type="GO" id="GO:0006508">
    <property type="term" value="P:proteolysis"/>
    <property type="evidence" value="ECO:0007669"/>
    <property type="project" value="UniProtKB-KW"/>
</dbReference>
<dbReference type="HAMAP" id="MF_00161">
    <property type="entry name" value="LspA"/>
    <property type="match status" value="1"/>
</dbReference>
<dbReference type="InterPro" id="IPR001872">
    <property type="entry name" value="Peptidase_A8"/>
</dbReference>
<dbReference type="NCBIfam" id="TIGR00077">
    <property type="entry name" value="lspA"/>
    <property type="match status" value="1"/>
</dbReference>
<dbReference type="PANTHER" id="PTHR33695">
    <property type="entry name" value="LIPOPROTEIN SIGNAL PEPTIDASE"/>
    <property type="match status" value="1"/>
</dbReference>
<dbReference type="PANTHER" id="PTHR33695:SF1">
    <property type="entry name" value="LIPOPROTEIN SIGNAL PEPTIDASE"/>
    <property type="match status" value="1"/>
</dbReference>
<dbReference type="Pfam" id="PF01252">
    <property type="entry name" value="Peptidase_A8"/>
    <property type="match status" value="1"/>
</dbReference>
<dbReference type="PRINTS" id="PR00781">
    <property type="entry name" value="LIPOSIGPTASE"/>
</dbReference>
<dbReference type="PROSITE" id="PS00855">
    <property type="entry name" value="SPASE_II"/>
    <property type="match status" value="1"/>
</dbReference>
<reference key="1">
    <citation type="journal article" date="2003" name="Proc. Natl. Acad. Sci. U.S.A.">
        <title>Complete genome sequence and analysis of Wolinella succinogenes.</title>
        <authorList>
            <person name="Baar C."/>
            <person name="Eppinger M."/>
            <person name="Raddatz G."/>
            <person name="Simon J."/>
            <person name="Lanz C."/>
            <person name="Klimmek O."/>
            <person name="Nandakumar R."/>
            <person name="Gross R."/>
            <person name="Rosinus A."/>
            <person name="Keller H."/>
            <person name="Jagtap P."/>
            <person name="Linke B."/>
            <person name="Meyer F."/>
            <person name="Lederer H."/>
            <person name="Schuster S.C."/>
        </authorList>
    </citation>
    <scope>NUCLEOTIDE SEQUENCE [LARGE SCALE GENOMIC DNA]</scope>
    <source>
        <strain>ATCC 29543 / DSM 1740 / CCUG 13145 / JCM 31913 / LMG 7466 / NCTC 11488 / FDC 602W</strain>
    </source>
</reference>
<sequence>MRIALFRSLGLFVLVFAIDQAIKALILGGFRWESEALSITLAFNKGVAFSMFAFLEGWLKYIQLGMLGGILLFLAYDRSFFVAHYLPLSILLAAGFSNILDRFIHGGVVDYVYWHYGFEFAIFNFADVMIDVAVALFLWQTFFKQK</sequence>
<protein>
    <recommendedName>
        <fullName evidence="1">Lipoprotein signal peptidase</fullName>
        <ecNumber evidence="1">3.4.23.36</ecNumber>
    </recommendedName>
    <alternativeName>
        <fullName evidence="1">Prolipoprotein signal peptidase</fullName>
    </alternativeName>
    <alternativeName>
        <fullName evidence="1">Signal peptidase II</fullName>
        <shortName evidence="1">SPase II</shortName>
    </alternativeName>
</protein>
<accession>Q7M9M1</accession>
<comment type="function">
    <text evidence="1">This protein specifically catalyzes the removal of signal peptides from prolipoproteins.</text>
</comment>
<comment type="catalytic activity">
    <reaction evidence="1">
        <text>Release of signal peptides from bacterial membrane prolipoproteins. Hydrolyzes -Xaa-Yaa-Zaa-|-(S,diacylglyceryl)Cys-, in which Xaa is hydrophobic (preferably Leu), and Yaa (Ala or Ser) and Zaa (Gly or Ala) have small, neutral side chains.</text>
        <dbReference type="EC" id="3.4.23.36"/>
    </reaction>
</comment>
<comment type="pathway">
    <text evidence="1">Protein modification; lipoprotein biosynthesis (signal peptide cleavage).</text>
</comment>
<comment type="subcellular location">
    <subcellularLocation>
        <location evidence="1">Cell inner membrane</location>
        <topology evidence="1">Multi-pass membrane protein</topology>
    </subcellularLocation>
</comment>
<comment type="similarity">
    <text evidence="1">Belongs to the peptidase A8 family.</text>
</comment>
<evidence type="ECO:0000255" key="1">
    <source>
        <dbReference type="HAMAP-Rule" id="MF_00161"/>
    </source>
</evidence>
<keyword id="KW-0064">Aspartyl protease</keyword>
<keyword id="KW-0997">Cell inner membrane</keyword>
<keyword id="KW-1003">Cell membrane</keyword>
<keyword id="KW-0378">Hydrolase</keyword>
<keyword id="KW-0472">Membrane</keyword>
<keyword id="KW-0645">Protease</keyword>
<keyword id="KW-1185">Reference proteome</keyword>
<keyword id="KW-0812">Transmembrane</keyword>
<keyword id="KW-1133">Transmembrane helix</keyword>
<proteinExistence type="inferred from homology"/>
<name>LSPA_WOLSU</name>